<gene>
    <name type="primary">Sdccag8</name>
    <name type="ORF">si:dkey-60B15.1</name>
</gene>
<comment type="function">
    <text evidence="1 4">Plays a role in the establishment of cell polarity and epithelial lumen formation (PubMed:20835237). Also plays an essential role in ciliogenesis and subsequent Hedgehog signaling pathway that requires the presence of intact primary cilia for pathway activation. Mechanistically, interacts with and mediates RABEP2 centrosomal localization which is critical for ciliogenesis (By similarity).</text>
</comment>
<comment type="subcellular location">
    <subcellularLocation>
        <location evidence="1">Cytoplasm</location>
        <location evidence="1">Cytoskeleton</location>
        <location evidence="1">Microtubule organizing center</location>
        <location evidence="1">Centrosome</location>
        <location evidence="1">Centriole</location>
    </subcellularLocation>
    <subcellularLocation>
        <location evidence="1">Cytoplasm</location>
        <location evidence="1">Cytoskeleton</location>
        <location evidence="1">Microtubule organizing center</location>
        <location evidence="1">Centrosome</location>
    </subcellularLocation>
    <subcellularLocation>
        <location evidence="1">Cytoplasm</location>
        <location evidence="1">Cytoskeleton</location>
        <location evidence="1">Cilium basal body</location>
    </subcellularLocation>
    <subcellularLocation>
        <location evidence="1">Cell junction</location>
    </subcellularLocation>
    <text evidence="1">Located at the distal ends of both centrioles and colocalizes to centrosomes throughout the cell cycle.</text>
</comment>
<comment type="disruption phenotype">
    <text evidence="4">Morpholino oligonucleotide-mediated gene knockdown causes multiple developmental defects, including abnormal body axis curvature, shortened and broadened tails, kidney cysts at 72 hours post fertilization and hydrocephalus.</text>
</comment>
<comment type="sequence caution" evidence="5">
    <conflict type="erroneous gene model prediction">
        <sequence resource="EMBL-CDS" id="CAX14325"/>
    </conflict>
</comment>
<organism>
    <name type="scientific">Danio rerio</name>
    <name type="common">Zebrafish</name>
    <name type="synonym">Brachydanio rerio</name>
    <dbReference type="NCBI Taxonomy" id="7955"/>
    <lineage>
        <taxon>Eukaryota</taxon>
        <taxon>Metazoa</taxon>
        <taxon>Chordata</taxon>
        <taxon>Craniata</taxon>
        <taxon>Vertebrata</taxon>
        <taxon>Euteleostomi</taxon>
        <taxon>Actinopterygii</taxon>
        <taxon>Neopterygii</taxon>
        <taxon>Teleostei</taxon>
        <taxon>Ostariophysi</taxon>
        <taxon>Cypriniformes</taxon>
        <taxon>Danionidae</taxon>
        <taxon>Danioninae</taxon>
        <taxon>Danio</taxon>
    </lineage>
</organism>
<accession>B8JK76</accession>
<protein>
    <recommendedName>
        <fullName>Serologically defined colon cancer antigen 8 homolog</fullName>
    </recommendedName>
</protein>
<name>SDCG8_DANRE</name>
<reference key="1">
    <citation type="journal article" date="2013" name="Nature">
        <title>The zebrafish reference genome sequence and its relationship to the human genome.</title>
        <authorList>
            <person name="Howe K."/>
            <person name="Clark M.D."/>
            <person name="Torroja C.F."/>
            <person name="Torrance J."/>
            <person name="Berthelot C."/>
            <person name="Muffato M."/>
            <person name="Collins J.E."/>
            <person name="Humphray S."/>
            <person name="McLaren K."/>
            <person name="Matthews L."/>
            <person name="McLaren S."/>
            <person name="Sealy I."/>
            <person name="Caccamo M."/>
            <person name="Churcher C."/>
            <person name="Scott C."/>
            <person name="Barrett J.C."/>
            <person name="Koch R."/>
            <person name="Rauch G.J."/>
            <person name="White S."/>
            <person name="Chow W."/>
            <person name="Kilian B."/>
            <person name="Quintais L.T."/>
            <person name="Guerra-Assuncao J.A."/>
            <person name="Zhou Y."/>
            <person name="Gu Y."/>
            <person name="Yen J."/>
            <person name="Vogel J.H."/>
            <person name="Eyre T."/>
            <person name="Redmond S."/>
            <person name="Banerjee R."/>
            <person name="Chi J."/>
            <person name="Fu B."/>
            <person name="Langley E."/>
            <person name="Maguire S.F."/>
            <person name="Laird G.K."/>
            <person name="Lloyd D."/>
            <person name="Kenyon E."/>
            <person name="Donaldson S."/>
            <person name="Sehra H."/>
            <person name="Almeida-King J."/>
            <person name="Loveland J."/>
            <person name="Trevanion S."/>
            <person name="Jones M."/>
            <person name="Quail M."/>
            <person name="Willey D."/>
            <person name="Hunt A."/>
            <person name="Burton J."/>
            <person name="Sims S."/>
            <person name="McLay K."/>
            <person name="Plumb B."/>
            <person name="Davis J."/>
            <person name="Clee C."/>
            <person name="Oliver K."/>
            <person name="Clark R."/>
            <person name="Riddle C."/>
            <person name="Elliot D."/>
            <person name="Threadgold G."/>
            <person name="Harden G."/>
            <person name="Ware D."/>
            <person name="Begum S."/>
            <person name="Mortimore B."/>
            <person name="Kerry G."/>
            <person name="Heath P."/>
            <person name="Phillimore B."/>
            <person name="Tracey A."/>
            <person name="Corby N."/>
            <person name="Dunn M."/>
            <person name="Johnson C."/>
            <person name="Wood J."/>
            <person name="Clark S."/>
            <person name="Pelan S."/>
            <person name="Griffiths G."/>
            <person name="Smith M."/>
            <person name="Glithero R."/>
            <person name="Howden P."/>
            <person name="Barker N."/>
            <person name="Lloyd C."/>
            <person name="Stevens C."/>
            <person name="Harley J."/>
            <person name="Holt K."/>
            <person name="Panagiotidis G."/>
            <person name="Lovell J."/>
            <person name="Beasley H."/>
            <person name="Henderson C."/>
            <person name="Gordon D."/>
            <person name="Auger K."/>
            <person name="Wright D."/>
            <person name="Collins J."/>
            <person name="Raisen C."/>
            <person name="Dyer L."/>
            <person name="Leung K."/>
            <person name="Robertson L."/>
            <person name="Ambridge K."/>
            <person name="Leongamornlert D."/>
            <person name="McGuire S."/>
            <person name="Gilderthorp R."/>
            <person name="Griffiths C."/>
            <person name="Manthravadi D."/>
            <person name="Nichol S."/>
            <person name="Barker G."/>
            <person name="Whitehead S."/>
            <person name="Kay M."/>
            <person name="Brown J."/>
            <person name="Murnane C."/>
            <person name="Gray E."/>
            <person name="Humphries M."/>
            <person name="Sycamore N."/>
            <person name="Barker D."/>
            <person name="Saunders D."/>
            <person name="Wallis J."/>
            <person name="Babbage A."/>
            <person name="Hammond S."/>
            <person name="Mashreghi-Mohammadi M."/>
            <person name="Barr L."/>
            <person name="Martin S."/>
            <person name="Wray P."/>
            <person name="Ellington A."/>
            <person name="Matthews N."/>
            <person name="Ellwood M."/>
            <person name="Woodmansey R."/>
            <person name="Clark G."/>
            <person name="Cooper J."/>
            <person name="Tromans A."/>
            <person name="Grafham D."/>
            <person name="Skuce C."/>
            <person name="Pandian R."/>
            <person name="Andrews R."/>
            <person name="Harrison E."/>
            <person name="Kimberley A."/>
            <person name="Garnett J."/>
            <person name="Fosker N."/>
            <person name="Hall R."/>
            <person name="Garner P."/>
            <person name="Kelly D."/>
            <person name="Bird C."/>
            <person name="Palmer S."/>
            <person name="Gehring I."/>
            <person name="Berger A."/>
            <person name="Dooley C.M."/>
            <person name="Ersan-Urun Z."/>
            <person name="Eser C."/>
            <person name="Geiger H."/>
            <person name="Geisler M."/>
            <person name="Karotki L."/>
            <person name="Kirn A."/>
            <person name="Konantz J."/>
            <person name="Konantz M."/>
            <person name="Oberlander M."/>
            <person name="Rudolph-Geiger S."/>
            <person name="Teucke M."/>
            <person name="Lanz C."/>
            <person name="Raddatz G."/>
            <person name="Osoegawa K."/>
            <person name="Zhu B."/>
            <person name="Rapp A."/>
            <person name="Widaa S."/>
            <person name="Langford C."/>
            <person name="Yang F."/>
            <person name="Schuster S.C."/>
            <person name="Carter N.P."/>
            <person name="Harrow J."/>
            <person name="Ning Z."/>
            <person name="Herrero J."/>
            <person name="Searle S.M."/>
            <person name="Enright A."/>
            <person name="Geisler R."/>
            <person name="Plasterk R.H."/>
            <person name="Lee C."/>
            <person name="Westerfield M."/>
            <person name="de Jong P.J."/>
            <person name="Zon L.I."/>
            <person name="Postlethwait J.H."/>
            <person name="Nusslein-Volhard C."/>
            <person name="Hubbard T.J."/>
            <person name="Roest Crollius H."/>
            <person name="Rogers J."/>
            <person name="Stemple D.L."/>
        </authorList>
    </citation>
    <scope>NUCLEOTIDE SEQUENCE [LARGE SCALE GENOMIC DNA]</scope>
    <source>
        <strain>Tuebingen</strain>
    </source>
</reference>
<reference key="2">
    <citation type="journal article" date="2010" name="Nat. Genet.">
        <title>Candidate exome capture identifies mutation of SDCCAG8 as the cause of a retinal-renal ciliopathy.</title>
        <authorList>
            <person name="Otto E.A."/>
            <person name="Hurd T.W."/>
            <person name="Airik R."/>
            <person name="Chaki M."/>
            <person name="Zhou W."/>
            <person name="Stoetzel C."/>
            <person name="Patil S.B."/>
            <person name="Levy S."/>
            <person name="Ghosh A.K."/>
            <person name="Murga-Zamalloa C.A."/>
            <person name="van Reeuwijk J."/>
            <person name="Letteboer S.J."/>
            <person name="Sang L."/>
            <person name="Giles R.H."/>
            <person name="Liu Q."/>
            <person name="Coene K.L."/>
            <person name="Estrada-Cuzcano A."/>
            <person name="Collin R.W."/>
            <person name="McLaughlin H.M."/>
            <person name="Held S."/>
            <person name="Kasanuki J.M."/>
            <person name="Ramaswami G."/>
            <person name="Conte J."/>
            <person name="Lopez I."/>
            <person name="Washburn J."/>
            <person name="Macdonald J."/>
            <person name="Hu J."/>
            <person name="Yamashita Y."/>
            <person name="Maher E.R."/>
            <person name="Guay-Woodford L.M."/>
            <person name="Neumann H.P."/>
            <person name="Obermuller N."/>
            <person name="Koenekoop R.K."/>
            <person name="Bergmann C."/>
            <person name="Bei X."/>
            <person name="Lewis R.A."/>
            <person name="Katsanis N."/>
            <person name="Lopes V."/>
            <person name="Williams D.S."/>
            <person name="Lyons R.H."/>
            <person name="Dang C.V."/>
            <person name="Brito D.A."/>
            <person name="Dias M.B."/>
            <person name="Zhang X."/>
            <person name="Cavalcoli J.D."/>
            <person name="Nurnberg G."/>
            <person name="Nurnberg P."/>
            <person name="Pierce E.A."/>
            <person name="Jackson P.K."/>
            <person name="Antignac C."/>
            <person name="Saunier S."/>
            <person name="Roepman R."/>
            <person name="Dollfus H."/>
            <person name="Khanna H."/>
            <person name="Hildebrandt F."/>
        </authorList>
    </citation>
    <scope>FUNCTION</scope>
    <scope>DISRUPTION PHENOTYPE</scope>
</reference>
<keyword id="KW-0965">Cell junction</keyword>
<keyword id="KW-0966">Cell projection</keyword>
<keyword id="KW-0970">Cilium biogenesis/degradation</keyword>
<keyword id="KW-0175">Coiled coil</keyword>
<keyword id="KW-0963">Cytoplasm</keyword>
<keyword id="KW-0206">Cytoskeleton</keyword>
<keyword id="KW-1185">Reference proteome</keyword>
<sequence length="701" mass="80437">MKPSLESDEEEELGALQKTLRERANRSIQHLSSMLAGHSSDSETSEPNQQELLSSVQQNPCSPVQQSEAVSQLRSLLQMKTKDANIQSLSPSRRKLAAKRATDDGSSSQPGVHNLVPIINNQSEYIQHLEAEVKFCKEELLEMKQRVRVVIVENEKLHHELKAKTIEDTLKEYTFVDSTLNMEHTAENTLKERLGSVNQAEDHKWRKEMEQLKCLYQAQTETLEAQVVSLKKDLACIQKEYEESKERLRHKEAMAVAAGTGQRVSGLCLKCAQHEAVLAETHTNVHVQSIERLTKERDELMTVLCSLRASQTDAQQREWGAYQQVKQAVEMAEEANLEKTRALVQCEHFHNELTRQRERLERELASEQDKISQAREAARSESKKEREELMQTLSSLSQKVAELQGLLDRGERDRNSLNSQLEEAYKKLTVQETDSSKMCAELRFLLSQAQLKKEEAERDVRDISSKLGRQLELAEQEVQKLGVELSGYRQRLEEAQRAEGRARAEAAGLAEGLSRAQRQLHLTRQEKEASERCCGEDMAALTFQAQRRERELTQTLQQMEAQHEKSVRETDALLSAQNSLIRKLKEECHTLGAKLEELAQSSRAEMEQLSLEREHLQESAEKLRGRCEEMEEQCVQHGRMHQRMKQRLQQLDQHCQASSQQVLQLLSRQKQLMQERQQLTEDLHSLKSQVHAGKRMDRLAV</sequence>
<evidence type="ECO:0000250" key="1">
    <source>
        <dbReference type="UniProtKB" id="Q86SQ7"/>
    </source>
</evidence>
<evidence type="ECO:0000255" key="2"/>
<evidence type="ECO:0000256" key="3">
    <source>
        <dbReference type="SAM" id="MobiDB-lite"/>
    </source>
</evidence>
<evidence type="ECO:0000269" key="4">
    <source>
    </source>
</evidence>
<evidence type="ECO:0000305" key="5"/>
<proteinExistence type="inferred from homology"/>
<dbReference type="EMBL" id="CT573119">
    <property type="protein sequence ID" value="CAX14325.1"/>
    <property type="status" value="ALT_SEQ"/>
    <property type="molecule type" value="Genomic_DNA"/>
</dbReference>
<dbReference type="EMBL" id="CU914440">
    <property type="status" value="NOT_ANNOTATED_CDS"/>
    <property type="molecule type" value="Genomic_DNA"/>
</dbReference>
<dbReference type="RefSeq" id="XP_017214440.1">
    <property type="nucleotide sequence ID" value="XM_017358951.1"/>
</dbReference>
<dbReference type="SMR" id="B8JK76"/>
<dbReference type="FunCoup" id="B8JK76">
    <property type="interactions" value="146"/>
</dbReference>
<dbReference type="STRING" id="7955.ENSDARP00000153600"/>
<dbReference type="PaxDb" id="7955-ENSDARP00000099835"/>
<dbReference type="PeptideAtlas" id="B8JK76"/>
<dbReference type="AGR" id="ZFIN:ZDB-GENE-090313-318"/>
<dbReference type="ZFIN" id="ZDB-GENE-090313-318">
    <property type="gene designation" value="sdccag8"/>
</dbReference>
<dbReference type="eggNOG" id="ENOG502R5XE">
    <property type="taxonomic scope" value="Eukaryota"/>
</dbReference>
<dbReference type="HOGENOM" id="CLU_024506_0_0_1"/>
<dbReference type="InParanoid" id="B8JK76"/>
<dbReference type="PhylomeDB" id="B8JK76"/>
<dbReference type="TreeFam" id="TF325472"/>
<dbReference type="PRO" id="PR:B8JK76"/>
<dbReference type="Proteomes" id="UP000000437">
    <property type="component" value="Unplaced"/>
</dbReference>
<dbReference type="GO" id="GO:0070161">
    <property type="term" value="C:anchoring junction"/>
    <property type="evidence" value="ECO:0007669"/>
    <property type="project" value="UniProtKB-SubCell"/>
</dbReference>
<dbReference type="GO" id="GO:0042995">
    <property type="term" value="C:cell projection"/>
    <property type="evidence" value="ECO:0007669"/>
    <property type="project" value="UniProtKB-KW"/>
</dbReference>
<dbReference type="GO" id="GO:0005814">
    <property type="term" value="C:centriole"/>
    <property type="evidence" value="ECO:0000318"/>
    <property type="project" value="GO_Central"/>
</dbReference>
<dbReference type="GO" id="GO:0005813">
    <property type="term" value="C:centrosome"/>
    <property type="evidence" value="ECO:0000318"/>
    <property type="project" value="GO_Central"/>
</dbReference>
<dbReference type="GO" id="GO:0005737">
    <property type="term" value="C:cytoplasm"/>
    <property type="evidence" value="ECO:0007669"/>
    <property type="project" value="UniProtKB-KW"/>
</dbReference>
<dbReference type="GO" id="GO:0030030">
    <property type="term" value="P:cell projection organization"/>
    <property type="evidence" value="ECO:0007669"/>
    <property type="project" value="UniProtKB-KW"/>
</dbReference>
<dbReference type="GO" id="GO:0007098">
    <property type="term" value="P:centrosome cycle"/>
    <property type="evidence" value="ECO:0007669"/>
    <property type="project" value="InterPro"/>
</dbReference>
<dbReference type="GO" id="GO:0043009">
    <property type="term" value="P:chordate embryonic development"/>
    <property type="evidence" value="ECO:0000315"/>
    <property type="project" value="ZFIN"/>
</dbReference>
<dbReference type="GO" id="GO:0030010">
    <property type="term" value="P:establishment of cell polarity"/>
    <property type="evidence" value="ECO:0000318"/>
    <property type="project" value="GO_Central"/>
</dbReference>
<dbReference type="GO" id="GO:0031023">
    <property type="term" value="P:microtubule organizing center organization"/>
    <property type="evidence" value="ECO:0000318"/>
    <property type="project" value="GO_Central"/>
</dbReference>
<dbReference type="GO" id="GO:0001764">
    <property type="term" value="P:neuron migration"/>
    <property type="evidence" value="ECO:0000318"/>
    <property type="project" value="GO_Central"/>
</dbReference>
<dbReference type="GO" id="GO:0035148">
    <property type="term" value="P:tube formation"/>
    <property type="evidence" value="ECO:0000318"/>
    <property type="project" value="GO_Central"/>
</dbReference>
<dbReference type="InterPro" id="IPR031887">
    <property type="entry name" value="SDCCAG8"/>
</dbReference>
<dbReference type="PANTHER" id="PTHR34343">
    <property type="entry name" value="SEROLOGICALLY DEFINED COLON CANCER ANTIGEN 8"/>
    <property type="match status" value="1"/>
</dbReference>
<dbReference type="PANTHER" id="PTHR34343:SF1">
    <property type="entry name" value="SEROLOGICALLY DEFINED COLON CANCER ANTIGEN 8"/>
    <property type="match status" value="1"/>
</dbReference>
<dbReference type="Pfam" id="PF15964">
    <property type="entry name" value="CCCAP"/>
    <property type="match status" value="1"/>
</dbReference>
<feature type="chain" id="PRO_0000407928" description="Serologically defined colon cancer antigen 8 homolog">
    <location>
        <begin position="1"/>
        <end position="701"/>
    </location>
</feature>
<feature type="region of interest" description="Disordered" evidence="3">
    <location>
        <begin position="1"/>
        <end position="67"/>
    </location>
</feature>
<feature type="region of interest" description="Disordered" evidence="3">
    <location>
        <begin position="84"/>
        <end position="114"/>
    </location>
</feature>
<feature type="region of interest" description="Disordered" evidence="3">
    <location>
        <begin position="364"/>
        <end position="387"/>
    </location>
</feature>
<feature type="coiled-coil region" evidence="2">
    <location>
        <begin position="119"/>
        <end position="173"/>
    </location>
</feature>
<feature type="coiled-coil region" evidence="2">
    <location>
        <begin position="203"/>
        <end position="258"/>
    </location>
</feature>
<feature type="coiled-coil region" evidence="2">
    <location>
        <begin position="323"/>
        <end position="695"/>
    </location>
</feature>
<feature type="compositionally biased region" description="Acidic residues" evidence="3">
    <location>
        <begin position="1"/>
        <end position="13"/>
    </location>
</feature>
<feature type="compositionally biased region" description="Polar residues" evidence="3">
    <location>
        <begin position="45"/>
        <end position="67"/>
    </location>
</feature>